<name>PHS_BRUSI</name>
<feature type="chain" id="PRO_1000080605" description="Putative pterin-4-alpha-carbinolamine dehydratase">
    <location>
        <begin position="1"/>
        <end position="97"/>
    </location>
</feature>
<sequence>MARNRLTESEMNEALRALDGWQKVDGREAITRSFKFKDFSTAFGFMAQAALYAEKLDHHPEWFNAYNRVDVTLATHSENGVTELDIKMARKMNAIAG</sequence>
<comment type="catalytic activity">
    <reaction evidence="1">
        <text>(4aS,6R)-4a-hydroxy-L-erythro-5,6,7,8-tetrahydrobiopterin = (6R)-L-erythro-6,7-dihydrobiopterin + H2O</text>
        <dbReference type="Rhea" id="RHEA:11920"/>
        <dbReference type="ChEBI" id="CHEBI:15377"/>
        <dbReference type="ChEBI" id="CHEBI:15642"/>
        <dbReference type="ChEBI" id="CHEBI:43120"/>
        <dbReference type="EC" id="4.2.1.96"/>
    </reaction>
</comment>
<comment type="similarity">
    <text evidence="1">Belongs to the pterin-4-alpha-carbinolamine dehydratase family.</text>
</comment>
<proteinExistence type="inferred from homology"/>
<keyword id="KW-0456">Lyase</keyword>
<gene>
    <name type="ordered locus">BSUIS_A0085</name>
</gene>
<accession>B0CIJ4</accession>
<evidence type="ECO:0000255" key="1">
    <source>
        <dbReference type="HAMAP-Rule" id="MF_00434"/>
    </source>
</evidence>
<reference key="1">
    <citation type="submission" date="2007-12" db="EMBL/GenBank/DDBJ databases">
        <title>Brucella suis ATCC 23445 whole genome shotgun sequencing project.</title>
        <authorList>
            <person name="Setubal J.C."/>
            <person name="Bowns C."/>
            <person name="Boyle S."/>
            <person name="Crasta O.R."/>
            <person name="Czar M.J."/>
            <person name="Dharmanolla C."/>
            <person name="Gillespie J.J."/>
            <person name="Kenyon R.W."/>
            <person name="Lu J."/>
            <person name="Mane S."/>
            <person name="Mohapatra S."/>
            <person name="Nagrani S."/>
            <person name="Purkayastha A."/>
            <person name="Rajasimha H.K."/>
            <person name="Shallom J.M."/>
            <person name="Shallom S."/>
            <person name="Shukla M."/>
            <person name="Snyder E.E."/>
            <person name="Sobral B.W."/>
            <person name="Wattam A.R."/>
            <person name="Will R."/>
            <person name="Williams K."/>
            <person name="Yoo H."/>
            <person name="Bruce D."/>
            <person name="Detter C."/>
            <person name="Munk C."/>
            <person name="Brettin T.S."/>
        </authorList>
    </citation>
    <scope>NUCLEOTIDE SEQUENCE [LARGE SCALE GENOMIC DNA]</scope>
    <source>
        <strain>ATCC 23445 / NCTC 10510</strain>
    </source>
</reference>
<dbReference type="EC" id="4.2.1.96" evidence="1"/>
<dbReference type="EMBL" id="CP000911">
    <property type="protein sequence ID" value="ABY37190.1"/>
    <property type="molecule type" value="Genomic_DNA"/>
</dbReference>
<dbReference type="RefSeq" id="WP_002965330.1">
    <property type="nucleotide sequence ID" value="NC_010169.1"/>
</dbReference>
<dbReference type="SMR" id="B0CIJ4"/>
<dbReference type="KEGG" id="bmt:BSUIS_A0085"/>
<dbReference type="HOGENOM" id="CLU_081974_3_2_5"/>
<dbReference type="Proteomes" id="UP000008545">
    <property type="component" value="Chromosome I"/>
</dbReference>
<dbReference type="GO" id="GO:0008124">
    <property type="term" value="F:4-alpha-hydroxytetrahydrobiopterin dehydratase activity"/>
    <property type="evidence" value="ECO:0007669"/>
    <property type="project" value="UniProtKB-UniRule"/>
</dbReference>
<dbReference type="GO" id="GO:0006729">
    <property type="term" value="P:tetrahydrobiopterin biosynthetic process"/>
    <property type="evidence" value="ECO:0007669"/>
    <property type="project" value="InterPro"/>
</dbReference>
<dbReference type="CDD" id="cd00914">
    <property type="entry name" value="PCD_DCoH_subfamily_b"/>
    <property type="match status" value="1"/>
</dbReference>
<dbReference type="Gene3D" id="3.30.1360.20">
    <property type="entry name" value="Transcriptional coactivator/pterin dehydratase"/>
    <property type="match status" value="1"/>
</dbReference>
<dbReference type="HAMAP" id="MF_00434">
    <property type="entry name" value="Pterin_4_alpha"/>
    <property type="match status" value="1"/>
</dbReference>
<dbReference type="InterPro" id="IPR036428">
    <property type="entry name" value="PCD_sf"/>
</dbReference>
<dbReference type="InterPro" id="IPR001533">
    <property type="entry name" value="Pterin_deHydtase"/>
</dbReference>
<dbReference type="NCBIfam" id="NF002017">
    <property type="entry name" value="PRK00823.1-2"/>
    <property type="match status" value="1"/>
</dbReference>
<dbReference type="NCBIfam" id="NF002018">
    <property type="entry name" value="PRK00823.1-3"/>
    <property type="match status" value="1"/>
</dbReference>
<dbReference type="PANTHER" id="PTHR12599">
    <property type="entry name" value="PTERIN-4-ALPHA-CARBINOLAMINE DEHYDRATASE"/>
    <property type="match status" value="1"/>
</dbReference>
<dbReference type="PANTHER" id="PTHR12599:SF0">
    <property type="entry name" value="PTERIN-4-ALPHA-CARBINOLAMINE DEHYDRATASE"/>
    <property type="match status" value="1"/>
</dbReference>
<dbReference type="Pfam" id="PF01329">
    <property type="entry name" value="Pterin_4a"/>
    <property type="match status" value="1"/>
</dbReference>
<dbReference type="SUPFAM" id="SSF55248">
    <property type="entry name" value="PCD-like"/>
    <property type="match status" value="1"/>
</dbReference>
<protein>
    <recommendedName>
        <fullName evidence="1">Putative pterin-4-alpha-carbinolamine dehydratase</fullName>
        <shortName evidence="1">PHS</shortName>
        <ecNumber evidence="1">4.2.1.96</ecNumber>
    </recommendedName>
    <alternativeName>
        <fullName evidence="1">4-alpha-hydroxy-tetrahydropterin dehydratase</fullName>
    </alternativeName>
    <alternativeName>
        <fullName evidence="1">Pterin carbinolamine dehydratase</fullName>
        <shortName evidence="1">PCD</shortName>
    </alternativeName>
</protein>
<organism>
    <name type="scientific">Brucella suis (strain ATCC 23445 / NCTC 10510)</name>
    <dbReference type="NCBI Taxonomy" id="470137"/>
    <lineage>
        <taxon>Bacteria</taxon>
        <taxon>Pseudomonadati</taxon>
        <taxon>Pseudomonadota</taxon>
        <taxon>Alphaproteobacteria</taxon>
        <taxon>Hyphomicrobiales</taxon>
        <taxon>Brucellaceae</taxon>
        <taxon>Brucella/Ochrobactrum group</taxon>
        <taxon>Brucella</taxon>
    </lineage>
</organism>